<accession>P03482</accession>
<keyword id="KW-0106">Calcium</keyword>
<keyword id="KW-1015">Disulfide bond</keyword>
<keyword id="KW-0325">Glycoprotein</keyword>
<keyword id="KW-0326">Glycosidase</keyword>
<keyword id="KW-1032">Host cell membrane</keyword>
<keyword id="KW-1043">Host membrane</keyword>
<keyword id="KW-0378">Hydrolase</keyword>
<keyword id="KW-0472">Membrane</keyword>
<keyword id="KW-0479">Metal-binding</keyword>
<keyword id="KW-0735">Signal-anchor</keyword>
<keyword id="KW-0812">Transmembrane</keyword>
<keyword id="KW-1133">Transmembrane helix</keyword>
<keyword id="KW-0946">Virion</keyword>
<comment type="function">
    <text evidence="1">Catalyzes the removal of terminal sialic acid residues from viral and cellular glycoconjugates. Cleaves off the terminal sialic acids on the glycosylated HA during virus budding to facilitate virus release. Additionally helps virus spread through the circulation by further removing sialic acids from the cell surface. These cleavages prevent self-aggregation and ensure the efficient spread of the progeny virus from cell to cell. Otherwise, infection would be limited to one round of replication. Described as a receptor-destroying enzyme because it cleaves a terminal sialic acid from the cellular receptors. May facilitate viral invasion of the upper airways by cleaving the sialic acid moieties on the mucin of the airway epithelial cells. Likely to plays a role in the budding process through its association with lipid rafts during intracellular transport. May additionally display a raft-association independent effect on budding. Plays a role in the determination of host range restriction on replication and virulence. Sialidase activity in late endosome/lysosome traffic seems to enhance virus replication.</text>
</comment>
<comment type="catalytic activity">
    <reaction evidence="1">
        <text>Hydrolysis of alpha-(2-&gt;3)-, alpha-(2-&gt;6)-, alpha-(2-&gt;8)- glycosidic linkages of terminal sialic acid residues in oligosaccharides, glycoproteins, glycolipids, colominic acid and synthetic substrates.</text>
        <dbReference type="EC" id="3.2.1.18"/>
    </reaction>
</comment>
<comment type="cofactor">
    <cofactor evidence="1">
        <name>Ca(2+)</name>
        <dbReference type="ChEBI" id="CHEBI:29108"/>
    </cofactor>
</comment>
<comment type="activity regulation">
    <text evidence="1">Inhibited by the neuraminidase inhibitors zanamivir (Relenza) and oseltamivir (Tamiflu). These drugs interfere with the release of progeny virus from infected cells and are effective against all influenza strains. Resistance to neuraminidase inhibitors is quite rare.</text>
</comment>
<comment type="subunit">
    <text evidence="1">Homotetramer.</text>
</comment>
<comment type="subcellular location">
    <subcellularLocation>
        <location evidence="1">Virion membrane</location>
    </subcellularLocation>
    <subcellularLocation>
        <location evidence="1">Host apical cell membrane</location>
        <topology evidence="1">Single-pass type II membrane protein</topology>
    </subcellularLocation>
    <text evidence="1">Preferentially accumulates at the apical plasma membrane in infected polarized epithelial cells, which is the virus assembly site. Uses lipid rafts for cell surface transport and apical sorting. In the virion, forms a mushroom-shaped spike on the surface of the membrane.</text>
</comment>
<comment type="domain">
    <text evidence="1">Intact N-terminus is essential for virion morphogenesis. Possesses two apical sorting signals, one in the ectodomain, which is likely to be a glycan, and the other in the transmembrane domain. The transmembrane domain also plays a role in lipid raft association.</text>
</comment>
<comment type="PTM">
    <text evidence="1">N-glycosylated.</text>
</comment>
<comment type="miscellaneous">
    <text>The influenza A genome consist of 8 RNA segments. Genetic variation of hemagglutinin and/or neuraminidase genes results in the emergence of new influenza strains. The mechanism of variation can be the result of point mutations or the result of genetic reassortment between segments of two different strains.</text>
</comment>
<comment type="similarity">
    <text evidence="1">Belongs to the glycosyl hydrolase 34 family.</text>
</comment>
<evidence type="ECO:0000255" key="1">
    <source>
        <dbReference type="HAMAP-Rule" id="MF_04071"/>
    </source>
</evidence>
<proteinExistence type="inferred from homology"/>
<name>NRAM_I75A3</name>
<gene>
    <name evidence="1" type="primary">NA</name>
</gene>
<protein>
    <recommendedName>
        <fullName evidence="1">Neuraminidase</fullName>
        <ecNumber evidence="1">3.2.1.18</ecNumber>
    </recommendedName>
</protein>
<feature type="chain" id="PRO_0000078724" description="Neuraminidase">
    <location>
        <begin position="1"/>
        <end position="469"/>
    </location>
</feature>
<feature type="topological domain" description="Intravirion" evidence="1">
    <location>
        <begin position="1"/>
        <end position="9"/>
    </location>
</feature>
<feature type="transmembrane region" description="Helical" evidence="1">
    <location>
        <begin position="10"/>
        <end position="30"/>
    </location>
</feature>
<feature type="topological domain" description="Virion surface" evidence="1">
    <location>
        <begin position="31"/>
        <end position="469"/>
    </location>
</feature>
<feature type="region of interest" description="Involved in apical transport and lipid raft association" evidence="1">
    <location>
        <begin position="11"/>
        <end position="33"/>
    </location>
</feature>
<feature type="region of interest" description="Hypervariable stalk region" evidence="1">
    <location>
        <begin position="36"/>
        <end position="88"/>
    </location>
</feature>
<feature type="region of interest" description="Head of neuraminidase" evidence="1">
    <location>
        <begin position="91"/>
        <end position="469"/>
    </location>
</feature>
<feature type="active site" description="Proton donor/acceptor" evidence="1">
    <location>
        <position position="151"/>
    </location>
</feature>
<feature type="active site" description="Nucleophile" evidence="1">
    <location>
        <position position="406"/>
    </location>
</feature>
<feature type="binding site" evidence="1">
    <location>
        <position position="118"/>
    </location>
    <ligand>
        <name>substrate</name>
    </ligand>
</feature>
<feature type="binding site" evidence="1">
    <location>
        <position position="152"/>
    </location>
    <ligand>
        <name>substrate</name>
    </ligand>
</feature>
<feature type="binding site" evidence="1">
    <location>
        <begin position="276"/>
        <end position="277"/>
    </location>
    <ligand>
        <name>substrate</name>
    </ligand>
</feature>
<feature type="binding site" evidence="1">
    <location>
        <position position="292"/>
    </location>
    <ligand>
        <name>substrate</name>
    </ligand>
</feature>
<feature type="binding site" evidence="1">
    <location>
        <position position="293"/>
    </location>
    <ligand>
        <name>Ca(2+)</name>
        <dbReference type="ChEBI" id="CHEBI:29108"/>
    </ligand>
</feature>
<feature type="binding site" evidence="1">
    <location>
        <position position="297"/>
    </location>
    <ligand>
        <name>Ca(2+)</name>
        <dbReference type="ChEBI" id="CHEBI:29108"/>
    </ligand>
</feature>
<feature type="binding site" evidence="1">
    <location>
        <position position="324"/>
    </location>
    <ligand>
        <name>Ca(2+)</name>
        <dbReference type="ChEBI" id="CHEBI:29108"/>
    </ligand>
</feature>
<feature type="binding site" evidence="1">
    <location>
        <position position="371"/>
    </location>
    <ligand>
        <name>substrate</name>
    </ligand>
</feature>
<feature type="glycosylation site" description="N-linked (GlcNAc...) asparagine; by host" evidence="1">
    <location>
        <position position="61"/>
    </location>
</feature>
<feature type="glycosylation site" description="N-linked (GlcNAc...) asparagine; by host" evidence="1">
    <location>
        <position position="70"/>
    </location>
</feature>
<feature type="glycosylation site" description="N-linked (GlcNAc...) asparagine; by host" evidence="1">
    <location>
        <position position="86"/>
    </location>
</feature>
<feature type="glycosylation site" description="N-linked (GlcNAc...) asparagine; by host" evidence="1">
    <location>
        <position position="146"/>
    </location>
</feature>
<feature type="glycosylation site" description="N-linked (GlcNAc...) asparagine; by host" evidence="1">
    <location>
        <position position="200"/>
    </location>
</feature>
<feature type="glycosylation site" description="N-linked (GlcNAc...) asparagine; by host" evidence="1">
    <location>
        <position position="234"/>
    </location>
</feature>
<feature type="glycosylation site" description="N-linked (GlcNAc...) asparagine; by host" evidence="1">
    <location>
        <position position="402"/>
    </location>
</feature>
<feature type="disulfide bond" evidence="1">
    <location>
        <begin position="92"/>
        <end position="417"/>
    </location>
</feature>
<feature type="disulfide bond" evidence="1">
    <location>
        <begin position="124"/>
        <end position="129"/>
    </location>
</feature>
<feature type="disulfide bond" evidence="1">
    <location>
        <begin position="183"/>
        <end position="230"/>
    </location>
</feature>
<feature type="disulfide bond" evidence="1">
    <location>
        <begin position="232"/>
        <end position="237"/>
    </location>
</feature>
<feature type="disulfide bond" evidence="1">
    <location>
        <begin position="278"/>
        <end position="291"/>
    </location>
</feature>
<feature type="disulfide bond" evidence="1">
    <location>
        <begin position="280"/>
        <end position="289"/>
    </location>
</feature>
<feature type="disulfide bond" evidence="1">
    <location>
        <begin position="318"/>
        <end position="337"/>
    </location>
</feature>
<feature type="disulfide bond" evidence="1">
    <location>
        <begin position="421"/>
        <end position="447"/>
    </location>
</feature>
<organismHost>
    <name type="scientific">Aves</name>
    <dbReference type="NCBI Taxonomy" id="8782"/>
</organismHost>
<organismHost>
    <name type="scientific">Cetacea</name>
    <name type="common">whales</name>
    <dbReference type="NCBI Taxonomy" id="9721"/>
</organismHost>
<organismHost>
    <name type="scientific">Homo sapiens</name>
    <name type="common">Human</name>
    <dbReference type="NCBI Taxonomy" id="9606"/>
</organismHost>
<organismHost>
    <name type="scientific">Phocidae</name>
    <name type="common">true seals</name>
    <dbReference type="NCBI Taxonomy" id="9709"/>
</organismHost>
<organismHost>
    <name type="scientific">Sus scrofa</name>
    <name type="common">Pig</name>
    <dbReference type="NCBI Taxonomy" id="9823"/>
</organismHost>
<organism>
    <name type="scientific">Influenza A virus (strain A/Victoria/3/1975 H3N2)</name>
    <dbReference type="NCBI Taxonomy" id="392809"/>
    <lineage>
        <taxon>Viruses</taxon>
        <taxon>Riboviria</taxon>
        <taxon>Orthornavirae</taxon>
        <taxon>Negarnaviricota</taxon>
        <taxon>Polyploviricotina</taxon>
        <taxon>Insthoviricetes</taxon>
        <taxon>Articulavirales</taxon>
        <taxon>Orthomyxoviridae</taxon>
        <taxon>Alphainfluenzavirus</taxon>
        <taxon>Alphainfluenzavirus influenzae</taxon>
        <taxon>Influenza A virus</taxon>
    </lineage>
</organism>
<reference key="1">
    <citation type="journal article" date="1982" name="J. Mol. Biol.">
        <title>Complete nucleotide sequence of a human influenza neuraminidase gene of subtype N2 (A/Victoria/3/75).</title>
        <authorList>
            <person name="van Rompuy L."/>
            <person name="Min Jou W."/>
            <person name="Huylebroeck D."/>
            <person name="Fiers W."/>
        </authorList>
    </citation>
    <scope>NUCLEOTIDE SEQUENCE [GENOMIC RNA]</scope>
</reference>
<reference key="2">
    <citation type="journal article" date="2004" name="Virus Res.">
        <title>Assembly and budding of influenza virus.</title>
        <authorList>
            <person name="Nayak D.P."/>
            <person name="Hui E.K."/>
            <person name="Barman S."/>
        </authorList>
    </citation>
    <scope>REVIEW</scope>
</reference>
<reference key="3">
    <citation type="journal article" date="2005" name="N. Engl. J. Med.">
        <title>Neuraminidase inhibitors for influenza.</title>
        <authorList>
            <person name="Moscona A."/>
        </authorList>
    </citation>
    <scope>REVIEW</scope>
</reference>
<reference key="4">
    <citation type="journal article" date="2005" name="Biol. Pharm. Bull.">
        <title>Sialobiology of influenza: molecular mechanism of host range variation of influenza viruses.</title>
        <authorList>
            <person name="Suzuki Y."/>
        </authorList>
    </citation>
    <scope>REVIEW</scope>
</reference>
<sequence>MNPNQKIITIGSVSLTIATICFLMQIAILVTTVTLHFKQYECDSPANNQVMPCEPISIERNITEIVYLTNTTIEKEICPKLVEYRNWSKPQCKITGFAPFSKDNSIRLSAGGDIWVTREPYVSCDPRKCYQFALGQGTTLENKHSNDTIHDRTPHRTLLMNELGVPFHLGTRQVCIAWSSSSCHDGKAWLHVCVTGYDKNATASFIYDGRLVDSIGSWSQNILRTQESECVCINGTCTVVMTDGSASGRADTKILFIEEGKIVHISPLSGSAQHVEECSCYPRYPGVRCICRDNWKGSNRPVVDINVKDYSIDSSYVCSGLVGDTPRKNDRSSSSYCRNPNNEKGIHGVKGWAFDDGNDVWMGRTISEDSRSGYETFKVIGGWSTPNSKLQINRQVIVDSANRSGYSGIFSVEGKSCINRCFYVELIRGREQETRVWWTSNSIVVFCGTSGTYGTGSWPDGADINLMPI</sequence>
<dbReference type="EC" id="3.2.1.18" evidence="1"/>
<dbReference type="EMBL" id="J02173">
    <property type="protein sequence ID" value="AAB03361.1"/>
    <property type="status" value="ALT_SEQ"/>
    <property type="molecule type" value="Genomic_RNA"/>
</dbReference>
<dbReference type="SMR" id="P03482"/>
<dbReference type="CAZy" id="GH34">
    <property type="family name" value="Glycoside Hydrolase Family 34"/>
</dbReference>
<dbReference type="GlyCosmos" id="P03482">
    <property type="glycosylation" value="7 sites, No reported glycans"/>
</dbReference>
<dbReference type="GO" id="GO:0020002">
    <property type="term" value="C:host cell plasma membrane"/>
    <property type="evidence" value="ECO:0007669"/>
    <property type="project" value="UniProtKB-SubCell"/>
</dbReference>
<dbReference type="GO" id="GO:0016020">
    <property type="term" value="C:membrane"/>
    <property type="evidence" value="ECO:0007669"/>
    <property type="project" value="UniProtKB-UniRule"/>
</dbReference>
<dbReference type="GO" id="GO:0055036">
    <property type="term" value="C:virion membrane"/>
    <property type="evidence" value="ECO:0007669"/>
    <property type="project" value="UniProtKB-SubCell"/>
</dbReference>
<dbReference type="GO" id="GO:0004308">
    <property type="term" value="F:exo-alpha-sialidase activity"/>
    <property type="evidence" value="ECO:0007669"/>
    <property type="project" value="UniProtKB-UniRule"/>
</dbReference>
<dbReference type="GO" id="GO:0046872">
    <property type="term" value="F:metal ion binding"/>
    <property type="evidence" value="ECO:0007669"/>
    <property type="project" value="UniProtKB-UniRule"/>
</dbReference>
<dbReference type="GO" id="GO:0005975">
    <property type="term" value="P:carbohydrate metabolic process"/>
    <property type="evidence" value="ECO:0007669"/>
    <property type="project" value="InterPro"/>
</dbReference>
<dbReference type="GO" id="GO:0046761">
    <property type="term" value="P:viral budding from plasma membrane"/>
    <property type="evidence" value="ECO:0007669"/>
    <property type="project" value="UniProtKB-UniRule"/>
</dbReference>
<dbReference type="CDD" id="cd15483">
    <property type="entry name" value="Influenza_NA"/>
    <property type="match status" value="1"/>
</dbReference>
<dbReference type="Gene3D" id="2.120.10.10">
    <property type="match status" value="1"/>
</dbReference>
<dbReference type="HAMAP" id="MF_04071">
    <property type="entry name" value="INFV_NRAM"/>
    <property type="match status" value="1"/>
</dbReference>
<dbReference type="InterPro" id="IPR001860">
    <property type="entry name" value="Glyco_hydro_34"/>
</dbReference>
<dbReference type="InterPro" id="IPR033654">
    <property type="entry name" value="Sialidase_Influenza_A/B"/>
</dbReference>
<dbReference type="InterPro" id="IPR036278">
    <property type="entry name" value="Sialidase_sf"/>
</dbReference>
<dbReference type="Pfam" id="PF00064">
    <property type="entry name" value="Neur"/>
    <property type="match status" value="1"/>
</dbReference>
<dbReference type="SUPFAM" id="SSF50939">
    <property type="entry name" value="Sialidases"/>
    <property type="match status" value="1"/>
</dbReference>